<gene>
    <name evidence="2" type="primary">tuf</name>
    <name type="ordered locus">MCAP_0154</name>
</gene>
<evidence type="ECO:0000250" key="1"/>
<evidence type="ECO:0000255" key="2">
    <source>
        <dbReference type="HAMAP-Rule" id="MF_00118"/>
    </source>
</evidence>
<comment type="function">
    <text evidence="2">GTP hydrolase that promotes the GTP-dependent binding of aminoacyl-tRNA to the A-site of ribosomes during protein biosynthesis.</text>
</comment>
<comment type="catalytic activity">
    <reaction evidence="2">
        <text>GTP + H2O = GDP + phosphate + H(+)</text>
        <dbReference type="Rhea" id="RHEA:19669"/>
        <dbReference type="ChEBI" id="CHEBI:15377"/>
        <dbReference type="ChEBI" id="CHEBI:15378"/>
        <dbReference type="ChEBI" id="CHEBI:37565"/>
        <dbReference type="ChEBI" id="CHEBI:43474"/>
        <dbReference type="ChEBI" id="CHEBI:58189"/>
        <dbReference type="EC" id="3.6.5.3"/>
    </reaction>
    <physiologicalReaction direction="left-to-right" evidence="2">
        <dbReference type="Rhea" id="RHEA:19670"/>
    </physiologicalReaction>
</comment>
<comment type="subunit">
    <text evidence="2">Monomer.</text>
</comment>
<comment type="subcellular location">
    <subcellularLocation>
        <location evidence="2">Cytoplasm</location>
    </subcellularLocation>
</comment>
<comment type="similarity">
    <text evidence="2">Belongs to the TRAFAC class translation factor GTPase superfamily. Classic translation factor GTPase family. EF-Tu/EF-1A subfamily.</text>
</comment>
<accession>Q2SSW8</accession>
<organism>
    <name type="scientific">Mycoplasma capricolum subsp. capricolum (strain California kid / ATCC 27343 / NCTC 10154)</name>
    <dbReference type="NCBI Taxonomy" id="340047"/>
    <lineage>
        <taxon>Bacteria</taxon>
        <taxon>Bacillati</taxon>
        <taxon>Mycoplasmatota</taxon>
        <taxon>Mollicutes</taxon>
        <taxon>Mycoplasmataceae</taxon>
        <taxon>Mycoplasma</taxon>
    </lineage>
</organism>
<sequence length="395" mass="43304">MAKEQFDRSLPHVNIGTIGHVDHGKTTLTAAITKVLSEQGNAEFKDYANIDNAPEERERGITINTAHVEYKTANRHYAHVDCPGHADYVKNMITGAAQMDGAILVVAATDGPMPQTREHILLSRQVGVPKIVVFLNKCDMVEDDEMIDLVEMEIRDLLTEYDFDGEGAPVIRGSALGALNGDSKWTGAINELMAAVDEYIPTPQRDADKTFLMPVEDVFTITGRGTVATGRVERGTVKVNEEVEIIGLKEEPTKTVVTGLEMFRKLLDFAVAGDNVGALLRGVDRHSVERGQVLAKPGTIKPHTVLKASVYALTQEEGGRHKPFFNKYRPQFYFRTTDVTGEVTLPEGTDMVMPGDNVEMEIQLIKPVAVEEGTKFSIREGGRTIGAGTVISIEK</sequence>
<reference key="1">
    <citation type="submission" date="2005-09" db="EMBL/GenBank/DDBJ databases">
        <authorList>
            <person name="Glass J.I."/>
            <person name="Lartigue C."/>
            <person name="Pfannkoch C."/>
            <person name="Baden-Tillson H."/>
            <person name="Smith H.O."/>
            <person name="Venter J.C."/>
            <person name="Roske K."/>
            <person name="Wise K.S."/>
            <person name="Calcutt M.J."/>
            <person name="Nelson W.C."/>
            <person name="Nierman W.C."/>
        </authorList>
    </citation>
    <scope>NUCLEOTIDE SEQUENCE [LARGE SCALE GENOMIC DNA]</scope>
    <source>
        <strain>California kid / ATCC 27343 / NCTC 10154</strain>
    </source>
</reference>
<dbReference type="EC" id="3.6.5.3" evidence="2"/>
<dbReference type="EMBL" id="CP000123">
    <property type="protein sequence ID" value="ABC01493.1"/>
    <property type="molecule type" value="Genomic_DNA"/>
</dbReference>
<dbReference type="RefSeq" id="WP_011166362.1">
    <property type="nucleotide sequence ID" value="NC_007633.1"/>
</dbReference>
<dbReference type="SMR" id="Q2SSW8"/>
<dbReference type="GeneID" id="93426634"/>
<dbReference type="KEGG" id="mcp:MCAP_0154"/>
<dbReference type="HOGENOM" id="CLU_007265_0_0_14"/>
<dbReference type="PhylomeDB" id="Q2SSW8"/>
<dbReference type="Proteomes" id="UP000001928">
    <property type="component" value="Chromosome"/>
</dbReference>
<dbReference type="GO" id="GO:0005829">
    <property type="term" value="C:cytosol"/>
    <property type="evidence" value="ECO:0007669"/>
    <property type="project" value="TreeGrafter"/>
</dbReference>
<dbReference type="GO" id="GO:0005525">
    <property type="term" value="F:GTP binding"/>
    <property type="evidence" value="ECO:0007669"/>
    <property type="project" value="UniProtKB-UniRule"/>
</dbReference>
<dbReference type="GO" id="GO:0003924">
    <property type="term" value="F:GTPase activity"/>
    <property type="evidence" value="ECO:0007669"/>
    <property type="project" value="InterPro"/>
</dbReference>
<dbReference type="GO" id="GO:0003746">
    <property type="term" value="F:translation elongation factor activity"/>
    <property type="evidence" value="ECO:0007669"/>
    <property type="project" value="UniProtKB-UniRule"/>
</dbReference>
<dbReference type="CDD" id="cd01884">
    <property type="entry name" value="EF_Tu"/>
    <property type="match status" value="1"/>
</dbReference>
<dbReference type="CDD" id="cd03697">
    <property type="entry name" value="EFTU_II"/>
    <property type="match status" value="1"/>
</dbReference>
<dbReference type="CDD" id="cd03707">
    <property type="entry name" value="EFTU_III"/>
    <property type="match status" value="1"/>
</dbReference>
<dbReference type="FunFam" id="2.40.30.10:FF:000001">
    <property type="entry name" value="Elongation factor Tu"/>
    <property type="match status" value="1"/>
</dbReference>
<dbReference type="FunFam" id="3.40.50.300:FF:000003">
    <property type="entry name" value="Elongation factor Tu"/>
    <property type="match status" value="1"/>
</dbReference>
<dbReference type="Gene3D" id="3.40.50.300">
    <property type="entry name" value="P-loop containing nucleotide triphosphate hydrolases"/>
    <property type="match status" value="1"/>
</dbReference>
<dbReference type="Gene3D" id="2.40.30.10">
    <property type="entry name" value="Translation factors"/>
    <property type="match status" value="2"/>
</dbReference>
<dbReference type="HAMAP" id="MF_00118_B">
    <property type="entry name" value="EF_Tu_B"/>
    <property type="match status" value="1"/>
</dbReference>
<dbReference type="InterPro" id="IPR041709">
    <property type="entry name" value="EF-Tu_GTP-bd"/>
</dbReference>
<dbReference type="InterPro" id="IPR050055">
    <property type="entry name" value="EF-Tu_GTPase"/>
</dbReference>
<dbReference type="InterPro" id="IPR004161">
    <property type="entry name" value="EFTu-like_2"/>
</dbReference>
<dbReference type="InterPro" id="IPR033720">
    <property type="entry name" value="EFTU_2"/>
</dbReference>
<dbReference type="InterPro" id="IPR031157">
    <property type="entry name" value="G_TR_CS"/>
</dbReference>
<dbReference type="InterPro" id="IPR027417">
    <property type="entry name" value="P-loop_NTPase"/>
</dbReference>
<dbReference type="InterPro" id="IPR005225">
    <property type="entry name" value="Small_GTP-bd"/>
</dbReference>
<dbReference type="InterPro" id="IPR000795">
    <property type="entry name" value="T_Tr_GTP-bd_dom"/>
</dbReference>
<dbReference type="InterPro" id="IPR009000">
    <property type="entry name" value="Transl_B-barrel_sf"/>
</dbReference>
<dbReference type="InterPro" id="IPR009001">
    <property type="entry name" value="Transl_elong_EF1A/Init_IF2_C"/>
</dbReference>
<dbReference type="InterPro" id="IPR004541">
    <property type="entry name" value="Transl_elong_EFTu/EF1A_bac/org"/>
</dbReference>
<dbReference type="InterPro" id="IPR004160">
    <property type="entry name" value="Transl_elong_EFTu/EF1A_C"/>
</dbReference>
<dbReference type="NCBIfam" id="TIGR00485">
    <property type="entry name" value="EF-Tu"/>
    <property type="match status" value="1"/>
</dbReference>
<dbReference type="NCBIfam" id="NF000766">
    <property type="entry name" value="PRK00049.1"/>
    <property type="match status" value="1"/>
</dbReference>
<dbReference type="NCBIfam" id="NF009372">
    <property type="entry name" value="PRK12735.1"/>
    <property type="match status" value="1"/>
</dbReference>
<dbReference type="NCBIfam" id="NF009373">
    <property type="entry name" value="PRK12736.1"/>
    <property type="match status" value="1"/>
</dbReference>
<dbReference type="NCBIfam" id="TIGR00231">
    <property type="entry name" value="small_GTP"/>
    <property type="match status" value="1"/>
</dbReference>
<dbReference type="PANTHER" id="PTHR43721:SF22">
    <property type="entry name" value="ELONGATION FACTOR TU, MITOCHONDRIAL"/>
    <property type="match status" value="1"/>
</dbReference>
<dbReference type="PANTHER" id="PTHR43721">
    <property type="entry name" value="ELONGATION FACTOR TU-RELATED"/>
    <property type="match status" value="1"/>
</dbReference>
<dbReference type="Pfam" id="PF00009">
    <property type="entry name" value="GTP_EFTU"/>
    <property type="match status" value="1"/>
</dbReference>
<dbReference type="Pfam" id="PF03144">
    <property type="entry name" value="GTP_EFTU_D2"/>
    <property type="match status" value="1"/>
</dbReference>
<dbReference type="Pfam" id="PF03143">
    <property type="entry name" value="GTP_EFTU_D3"/>
    <property type="match status" value="1"/>
</dbReference>
<dbReference type="PRINTS" id="PR00315">
    <property type="entry name" value="ELONGATNFCT"/>
</dbReference>
<dbReference type="SUPFAM" id="SSF50465">
    <property type="entry name" value="EF-Tu/eEF-1alpha/eIF2-gamma C-terminal domain"/>
    <property type="match status" value="1"/>
</dbReference>
<dbReference type="SUPFAM" id="SSF52540">
    <property type="entry name" value="P-loop containing nucleoside triphosphate hydrolases"/>
    <property type="match status" value="1"/>
</dbReference>
<dbReference type="SUPFAM" id="SSF50447">
    <property type="entry name" value="Translation proteins"/>
    <property type="match status" value="1"/>
</dbReference>
<dbReference type="PROSITE" id="PS00301">
    <property type="entry name" value="G_TR_1"/>
    <property type="match status" value="1"/>
</dbReference>
<dbReference type="PROSITE" id="PS51722">
    <property type="entry name" value="G_TR_2"/>
    <property type="match status" value="1"/>
</dbReference>
<name>EFTU_MYCCT</name>
<feature type="chain" id="PRO_1000015698" description="Elongation factor Tu">
    <location>
        <begin position="1"/>
        <end position="395"/>
    </location>
</feature>
<feature type="domain" description="tr-type G">
    <location>
        <begin position="10"/>
        <end position="204"/>
    </location>
</feature>
<feature type="region of interest" description="G1" evidence="1">
    <location>
        <begin position="19"/>
        <end position="26"/>
    </location>
</feature>
<feature type="region of interest" description="G2" evidence="1">
    <location>
        <begin position="60"/>
        <end position="64"/>
    </location>
</feature>
<feature type="region of interest" description="G3" evidence="1">
    <location>
        <begin position="81"/>
        <end position="84"/>
    </location>
</feature>
<feature type="region of interest" description="G4" evidence="1">
    <location>
        <begin position="136"/>
        <end position="139"/>
    </location>
</feature>
<feature type="region of interest" description="G5" evidence="1">
    <location>
        <begin position="174"/>
        <end position="176"/>
    </location>
</feature>
<feature type="binding site" evidence="2">
    <location>
        <begin position="19"/>
        <end position="26"/>
    </location>
    <ligand>
        <name>GTP</name>
        <dbReference type="ChEBI" id="CHEBI:37565"/>
    </ligand>
</feature>
<feature type="binding site" evidence="2">
    <location>
        <position position="26"/>
    </location>
    <ligand>
        <name>Mg(2+)</name>
        <dbReference type="ChEBI" id="CHEBI:18420"/>
    </ligand>
</feature>
<feature type="binding site" evidence="2">
    <location>
        <begin position="81"/>
        <end position="85"/>
    </location>
    <ligand>
        <name>GTP</name>
        <dbReference type="ChEBI" id="CHEBI:37565"/>
    </ligand>
</feature>
<feature type="binding site" evidence="2">
    <location>
        <begin position="136"/>
        <end position="139"/>
    </location>
    <ligand>
        <name>GTP</name>
        <dbReference type="ChEBI" id="CHEBI:37565"/>
    </ligand>
</feature>
<proteinExistence type="inferred from homology"/>
<protein>
    <recommendedName>
        <fullName evidence="2">Elongation factor Tu</fullName>
        <shortName evidence="2">EF-Tu</shortName>
        <ecNumber evidence="2">3.6.5.3</ecNumber>
    </recommendedName>
</protein>
<keyword id="KW-0963">Cytoplasm</keyword>
<keyword id="KW-0251">Elongation factor</keyword>
<keyword id="KW-0342">GTP-binding</keyword>
<keyword id="KW-0378">Hydrolase</keyword>
<keyword id="KW-0460">Magnesium</keyword>
<keyword id="KW-0479">Metal-binding</keyword>
<keyword id="KW-0547">Nucleotide-binding</keyword>
<keyword id="KW-0648">Protein biosynthesis</keyword>